<accession>B5F3P9</accession>
<protein>
    <recommendedName>
        <fullName evidence="1">Protease HtpX</fullName>
        <ecNumber evidence="1">3.4.24.-</ecNumber>
    </recommendedName>
    <alternativeName>
        <fullName evidence="1">Heat shock protein HtpX</fullName>
    </alternativeName>
</protein>
<organism>
    <name type="scientific">Salmonella agona (strain SL483)</name>
    <dbReference type="NCBI Taxonomy" id="454166"/>
    <lineage>
        <taxon>Bacteria</taxon>
        <taxon>Pseudomonadati</taxon>
        <taxon>Pseudomonadota</taxon>
        <taxon>Gammaproteobacteria</taxon>
        <taxon>Enterobacterales</taxon>
        <taxon>Enterobacteriaceae</taxon>
        <taxon>Salmonella</taxon>
    </lineage>
</organism>
<feature type="chain" id="PRO_1000098839" description="Protease HtpX">
    <location>
        <begin position="1"/>
        <end position="293"/>
    </location>
</feature>
<feature type="transmembrane region" description="Helical" evidence="1">
    <location>
        <begin position="4"/>
        <end position="24"/>
    </location>
</feature>
<feature type="transmembrane region" description="Helical" evidence="1">
    <location>
        <begin position="34"/>
        <end position="54"/>
    </location>
</feature>
<feature type="transmembrane region" description="Helical" evidence="1">
    <location>
        <begin position="158"/>
        <end position="178"/>
    </location>
</feature>
<feature type="transmembrane region" description="Helical" evidence="1">
    <location>
        <begin position="193"/>
        <end position="213"/>
    </location>
</feature>
<feature type="active site" evidence="1">
    <location>
        <position position="140"/>
    </location>
</feature>
<feature type="binding site" evidence="1">
    <location>
        <position position="139"/>
    </location>
    <ligand>
        <name>Zn(2+)</name>
        <dbReference type="ChEBI" id="CHEBI:29105"/>
        <note>catalytic</note>
    </ligand>
</feature>
<feature type="binding site" evidence="1">
    <location>
        <position position="143"/>
    </location>
    <ligand>
        <name>Zn(2+)</name>
        <dbReference type="ChEBI" id="CHEBI:29105"/>
        <note>catalytic</note>
    </ligand>
</feature>
<feature type="binding site" evidence="1">
    <location>
        <position position="222"/>
    </location>
    <ligand>
        <name>Zn(2+)</name>
        <dbReference type="ChEBI" id="CHEBI:29105"/>
        <note>catalytic</note>
    </ligand>
</feature>
<proteinExistence type="inferred from homology"/>
<sequence>MMRIALFLLTNLAVMVVFGLVLSLTGIQSSSVQGLLIMALLFGFGGSFISLLMSKWMALKSVGGEVIEQPRNERERWLMNTVATQARQAGIAMPQVAIYHAPDINAFATGARRDASLVAVSTGLLQNMSPDEAEAVIAHEISHIANGDMVTMTLIQGVVNTFVIFISRIIAQIAAGFLGGNRDEGEGSNGNPLIYFAVATVLELVFGILASIITMWFSRYREFHADAGSAKLVGREKMIAALQRLKTSYEPQEATSMMAFCINGKSKSLSELFMTHPPLDKRIEALRSGEYLK</sequence>
<reference key="1">
    <citation type="journal article" date="2011" name="J. Bacteriol.">
        <title>Comparative genomics of 28 Salmonella enterica isolates: evidence for CRISPR-mediated adaptive sublineage evolution.</title>
        <authorList>
            <person name="Fricke W.F."/>
            <person name="Mammel M.K."/>
            <person name="McDermott P.F."/>
            <person name="Tartera C."/>
            <person name="White D.G."/>
            <person name="Leclerc J.E."/>
            <person name="Ravel J."/>
            <person name="Cebula T.A."/>
        </authorList>
    </citation>
    <scope>NUCLEOTIDE SEQUENCE [LARGE SCALE GENOMIC DNA]</scope>
    <source>
        <strain>SL483</strain>
    </source>
</reference>
<keyword id="KW-0997">Cell inner membrane</keyword>
<keyword id="KW-1003">Cell membrane</keyword>
<keyword id="KW-0378">Hydrolase</keyword>
<keyword id="KW-0472">Membrane</keyword>
<keyword id="KW-0479">Metal-binding</keyword>
<keyword id="KW-0482">Metalloprotease</keyword>
<keyword id="KW-0645">Protease</keyword>
<keyword id="KW-0812">Transmembrane</keyword>
<keyword id="KW-1133">Transmembrane helix</keyword>
<keyword id="KW-0862">Zinc</keyword>
<gene>
    <name evidence="1" type="primary">htpX</name>
    <name type="ordered locus">SeAg_B1287</name>
</gene>
<evidence type="ECO:0000255" key="1">
    <source>
        <dbReference type="HAMAP-Rule" id="MF_00188"/>
    </source>
</evidence>
<name>HTPX_SALA4</name>
<comment type="cofactor">
    <cofactor evidence="1">
        <name>Zn(2+)</name>
        <dbReference type="ChEBI" id="CHEBI:29105"/>
    </cofactor>
    <text evidence="1">Binds 1 zinc ion per subunit.</text>
</comment>
<comment type="subcellular location">
    <subcellularLocation>
        <location evidence="1">Cell inner membrane</location>
        <topology evidence="1">Multi-pass membrane protein</topology>
    </subcellularLocation>
</comment>
<comment type="similarity">
    <text evidence="1">Belongs to the peptidase M48B family.</text>
</comment>
<dbReference type="EC" id="3.4.24.-" evidence="1"/>
<dbReference type="EMBL" id="CP001138">
    <property type="protein sequence ID" value="ACH50243.1"/>
    <property type="molecule type" value="Genomic_DNA"/>
</dbReference>
<dbReference type="RefSeq" id="WP_000984498.1">
    <property type="nucleotide sequence ID" value="NC_011149.1"/>
</dbReference>
<dbReference type="SMR" id="B5F3P9"/>
<dbReference type="MEROPS" id="M48.002"/>
<dbReference type="GeneID" id="66756319"/>
<dbReference type="KEGG" id="sea:SeAg_B1287"/>
<dbReference type="HOGENOM" id="CLU_042266_1_0_6"/>
<dbReference type="Proteomes" id="UP000008819">
    <property type="component" value="Chromosome"/>
</dbReference>
<dbReference type="GO" id="GO:0005886">
    <property type="term" value="C:plasma membrane"/>
    <property type="evidence" value="ECO:0007669"/>
    <property type="project" value="UniProtKB-SubCell"/>
</dbReference>
<dbReference type="GO" id="GO:0004222">
    <property type="term" value="F:metalloendopeptidase activity"/>
    <property type="evidence" value="ECO:0007669"/>
    <property type="project" value="UniProtKB-UniRule"/>
</dbReference>
<dbReference type="GO" id="GO:0008270">
    <property type="term" value="F:zinc ion binding"/>
    <property type="evidence" value="ECO:0007669"/>
    <property type="project" value="UniProtKB-UniRule"/>
</dbReference>
<dbReference type="GO" id="GO:0006508">
    <property type="term" value="P:proteolysis"/>
    <property type="evidence" value="ECO:0007669"/>
    <property type="project" value="UniProtKB-KW"/>
</dbReference>
<dbReference type="CDD" id="cd07335">
    <property type="entry name" value="M48B_HtpX_like"/>
    <property type="match status" value="1"/>
</dbReference>
<dbReference type="FunFam" id="3.30.2010.10:FF:000001">
    <property type="entry name" value="Protease HtpX"/>
    <property type="match status" value="1"/>
</dbReference>
<dbReference type="Gene3D" id="3.30.2010.10">
    <property type="entry name" value="Metalloproteases ('zincins'), catalytic domain"/>
    <property type="match status" value="1"/>
</dbReference>
<dbReference type="HAMAP" id="MF_00188">
    <property type="entry name" value="Pept_M48_protease_HtpX"/>
    <property type="match status" value="1"/>
</dbReference>
<dbReference type="InterPro" id="IPR050083">
    <property type="entry name" value="HtpX_protease"/>
</dbReference>
<dbReference type="InterPro" id="IPR022919">
    <property type="entry name" value="Pept_M48_protease_HtpX"/>
</dbReference>
<dbReference type="InterPro" id="IPR001915">
    <property type="entry name" value="Peptidase_M48"/>
</dbReference>
<dbReference type="NCBIfam" id="NF003965">
    <property type="entry name" value="PRK05457.1"/>
    <property type="match status" value="1"/>
</dbReference>
<dbReference type="PANTHER" id="PTHR43221">
    <property type="entry name" value="PROTEASE HTPX"/>
    <property type="match status" value="1"/>
</dbReference>
<dbReference type="PANTHER" id="PTHR43221:SF1">
    <property type="entry name" value="PROTEASE HTPX"/>
    <property type="match status" value="1"/>
</dbReference>
<dbReference type="Pfam" id="PF01435">
    <property type="entry name" value="Peptidase_M48"/>
    <property type="match status" value="1"/>
</dbReference>